<dbReference type="EC" id="3.6.5.3" evidence="2"/>
<dbReference type="EMBL" id="CP000820">
    <property type="protein sequence ID" value="ABW15395.1"/>
    <property type="molecule type" value="Genomic_DNA"/>
</dbReference>
<dbReference type="RefSeq" id="WP_020463479.1">
    <property type="nucleotide sequence ID" value="NC_009921.1"/>
</dbReference>
<dbReference type="SMR" id="A8LC58"/>
<dbReference type="STRING" id="298653.Franean1_6051"/>
<dbReference type="KEGG" id="fre:Franean1_6051"/>
<dbReference type="eggNOG" id="COG0050">
    <property type="taxonomic scope" value="Bacteria"/>
</dbReference>
<dbReference type="HOGENOM" id="CLU_007265_0_1_11"/>
<dbReference type="GO" id="GO:0005829">
    <property type="term" value="C:cytosol"/>
    <property type="evidence" value="ECO:0007669"/>
    <property type="project" value="TreeGrafter"/>
</dbReference>
<dbReference type="GO" id="GO:0005525">
    <property type="term" value="F:GTP binding"/>
    <property type="evidence" value="ECO:0007669"/>
    <property type="project" value="UniProtKB-UniRule"/>
</dbReference>
<dbReference type="GO" id="GO:0003924">
    <property type="term" value="F:GTPase activity"/>
    <property type="evidence" value="ECO:0007669"/>
    <property type="project" value="InterPro"/>
</dbReference>
<dbReference type="GO" id="GO:0003746">
    <property type="term" value="F:translation elongation factor activity"/>
    <property type="evidence" value="ECO:0007669"/>
    <property type="project" value="UniProtKB-UniRule"/>
</dbReference>
<dbReference type="CDD" id="cd01884">
    <property type="entry name" value="EF_Tu"/>
    <property type="match status" value="1"/>
</dbReference>
<dbReference type="CDD" id="cd03697">
    <property type="entry name" value="EFTU_II"/>
    <property type="match status" value="1"/>
</dbReference>
<dbReference type="CDD" id="cd03707">
    <property type="entry name" value="EFTU_III"/>
    <property type="match status" value="1"/>
</dbReference>
<dbReference type="FunFam" id="2.40.30.10:FF:000001">
    <property type="entry name" value="Elongation factor Tu"/>
    <property type="match status" value="1"/>
</dbReference>
<dbReference type="FunFam" id="3.40.50.300:FF:000003">
    <property type="entry name" value="Elongation factor Tu"/>
    <property type="match status" value="1"/>
</dbReference>
<dbReference type="Gene3D" id="3.40.50.300">
    <property type="entry name" value="P-loop containing nucleotide triphosphate hydrolases"/>
    <property type="match status" value="1"/>
</dbReference>
<dbReference type="Gene3D" id="2.40.30.10">
    <property type="entry name" value="Translation factors"/>
    <property type="match status" value="2"/>
</dbReference>
<dbReference type="HAMAP" id="MF_00118_B">
    <property type="entry name" value="EF_Tu_B"/>
    <property type="match status" value="1"/>
</dbReference>
<dbReference type="InterPro" id="IPR041709">
    <property type="entry name" value="EF-Tu_GTP-bd"/>
</dbReference>
<dbReference type="InterPro" id="IPR050055">
    <property type="entry name" value="EF-Tu_GTPase"/>
</dbReference>
<dbReference type="InterPro" id="IPR004161">
    <property type="entry name" value="EFTu-like_2"/>
</dbReference>
<dbReference type="InterPro" id="IPR033720">
    <property type="entry name" value="EFTU_2"/>
</dbReference>
<dbReference type="InterPro" id="IPR031157">
    <property type="entry name" value="G_TR_CS"/>
</dbReference>
<dbReference type="InterPro" id="IPR027417">
    <property type="entry name" value="P-loop_NTPase"/>
</dbReference>
<dbReference type="InterPro" id="IPR005225">
    <property type="entry name" value="Small_GTP-bd"/>
</dbReference>
<dbReference type="InterPro" id="IPR000795">
    <property type="entry name" value="T_Tr_GTP-bd_dom"/>
</dbReference>
<dbReference type="InterPro" id="IPR009000">
    <property type="entry name" value="Transl_B-barrel_sf"/>
</dbReference>
<dbReference type="InterPro" id="IPR009001">
    <property type="entry name" value="Transl_elong_EF1A/Init_IF2_C"/>
</dbReference>
<dbReference type="InterPro" id="IPR004541">
    <property type="entry name" value="Transl_elong_EFTu/EF1A_bac/org"/>
</dbReference>
<dbReference type="InterPro" id="IPR004160">
    <property type="entry name" value="Transl_elong_EFTu/EF1A_C"/>
</dbReference>
<dbReference type="NCBIfam" id="TIGR00485">
    <property type="entry name" value="EF-Tu"/>
    <property type="match status" value="1"/>
</dbReference>
<dbReference type="NCBIfam" id="NF000766">
    <property type="entry name" value="PRK00049.1"/>
    <property type="match status" value="1"/>
</dbReference>
<dbReference type="NCBIfam" id="NF009372">
    <property type="entry name" value="PRK12735.1"/>
    <property type="match status" value="1"/>
</dbReference>
<dbReference type="NCBIfam" id="NF009373">
    <property type="entry name" value="PRK12736.1"/>
    <property type="match status" value="1"/>
</dbReference>
<dbReference type="NCBIfam" id="TIGR00231">
    <property type="entry name" value="small_GTP"/>
    <property type="match status" value="1"/>
</dbReference>
<dbReference type="PANTHER" id="PTHR43721:SF22">
    <property type="entry name" value="ELONGATION FACTOR TU, MITOCHONDRIAL"/>
    <property type="match status" value="1"/>
</dbReference>
<dbReference type="PANTHER" id="PTHR43721">
    <property type="entry name" value="ELONGATION FACTOR TU-RELATED"/>
    <property type="match status" value="1"/>
</dbReference>
<dbReference type="Pfam" id="PF00009">
    <property type="entry name" value="GTP_EFTU"/>
    <property type="match status" value="1"/>
</dbReference>
<dbReference type="Pfam" id="PF03144">
    <property type="entry name" value="GTP_EFTU_D2"/>
    <property type="match status" value="1"/>
</dbReference>
<dbReference type="Pfam" id="PF03143">
    <property type="entry name" value="GTP_EFTU_D3"/>
    <property type="match status" value="1"/>
</dbReference>
<dbReference type="PRINTS" id="PR00315">
    <property type="entry name" value="ELONGATNFCT"/>
</dbReference>
<dbReference type="SUPFAM" id="SSF50465">
    <property type="entry name" value="EF-Tu/eEF-1alpha/eIF2-gamma C-terminal domain"/>
    <property type="match status" value="1"/>
</dbReference>
<dbReference type="SUPFAM" id="SSF52540">
    <property type="entry name" value="P-loop containing nucleoside triphosphate hydrolases"/>
    <property type="match status" value="1"/>
</dbReference>
<dbReference type="SUPFAM" id="SSF50447">
    <property type="entry name" value="Translation proteins"/>
    <property type="match status" value="1"/>
</dbReference>
<dbReference type="PROSITE" id="PS00301">
    <property type="entry name" value="G_TR_1"/>
    <property type="match status" value="1"/>
</dbReference>
<dbReference type="PROSITE" id="PS51722">
    <property type="entry name" value="G_TR_2"/>
    <property type="match status" value="1"/>
</dbReference>
<proteinExistence type="inferred from homology"/>
<feature type="chain" id="PRO_1000095062" description="Elongation factor Tu">
    <location>
        <begin position="1"/>
        <end position="397"/>
    </location>
</feature>
<feature type="domain" description="tr-type G">
    <location>
        <begin position="10"/>
        <end position="206"/>
    </location>
</feature>
<feature type="region of interest" description="G1" evidence="1">
    <location>
        <begin position="19"/>
        <end position="26"/>
    </location>
</feature>
<feature type="region of interest" description="G2" evidence="1">
    <location>
        <begin position="62"/>
        <end position="66"/>
    </location>
</feature>
<feature type="region of interest" description="G3" evidence="1">
    <location>
        <begin position="83"/>
        <end position="86"/>
    </location>
</feature>
<feature type="region of interest" description="G4" evidence="1">
    <location>
        <begin position="138"/>
        <end position="141"/>
    </location>
</feature>
<feature type="region of interest" description="G5" evidence="1">
    <location>
        <begin position="176"/>
        <end position="178"/>
    </location>
</feature>
<feature type="binding site" evidence="2">
    <location>
        <begin position="19"/>
        <end position="26"/>
    </location>
    <ligand>
        <name>GTP</name>
        <dbReference type="ChEBI" id="CHEBI:37565"/>
    </ligand>
</feature>
<feature type="binding site" evidence="2">
    <location>
        <position position="26"/>
    </location>
    <ligand>
        <name>Mg(2+)</name>
        <dbReference type="ChEBI" id="CHEBI:18420"/>
    </ligand>
</feature>
<feature type="binding site" evidence="2">
    <location>
        <begin position="83"/>
        <end position="87"/>
    </location>
    <ligand>
        <name>GTP</name>
        <dbReference type="ChEBI" id="CHEBI:37565"/>
    </ligand>
</feature>
<feature type="binding site" evidence="2">
    <location>
        <begin position="138"/>
        <end position="141"/>
    </location>
    <ligand>
        <name>GTP</name>
        <dbReference type="ChEBI" id="CHEBI:37565"/>
    </ligand>
</feature>
<comment type="function">
    <text evidence="2">GTP hydrolase that promotes the GTP-dependent binding of aminoacyl-tRNA to the A-site of ribosomes during protein biosynthesis.</text>
</comment>
<comment type="catalytic activity">
    <reaction evidence="2">
        <text>GTP + H2O = GDP + phosphate + H(+)</text>
        <dbReference type="Rhea" id="RHEA:19669"/>
        <dbReference type="ChEBI" id="CHEBI:15377"/>
        <dbReference type="ChEBI" id="CHEBI:15378"/>
        <dbReference type="ChEBI" id="CHEBI:37565"/>
        <dbReference type="ChEBI" id="CHEBI:43474"/>
        <dbReference type="ChEBI" id="CHEBI:58189"/>
        <dbReference type="EC" id="3.6.5.3"/>
    </reaction>
    <physiologicalReaction direction="left-to-right" evidence="2">
        <dbReference type="Rhea" id="RHEA:19670"/>
    </physiologicalReaction>
</comment>
<comment type="subunit">
    <text evidence="2">Monomer.</text>
</comment>
<comment type="subcellular location">
    <subcellularLocation>
        <location evidence="2">Cytoplasm</location>
    </subcellularLocation>
</comment>
<comment type="similarity">
    <text evidence="2">Belongs to the TRAFAC class translation factor GTPase superfamily. Classic translation factor GTPase family. EF-Tu/EF-1A subfamily.</text>
</comment>
<evidence type="ECO:0000250" key="1"/>
<evidence type="ECO:0000255" key="2">
    <source>
        <dbReference type="HAMAP-Rule" id="MF_00118"/>
    </source>
</evidence>
<name>EFTU_PARS2</name>
<accession>A8LC58</accession>
<organism>
    <name type="scientific">Parafrankia sp. (strain EAN1pec)</name>
    <dbReference type="NCBI Taxonomy" id="298653"/>
    <lineage>
        <taxon>Bacteria</taxon>
        <taxon>Bacillati</taxon>
        <taxon>Actinomycetota</taxon>
        <taxon>Actinomycetes</taxon>
        <taxon>Frankiales</taxon>
        <taxon>Frankiaceae</taxon>
        <taxon>Parafrankia</taxon>
    </lineage>
</organism>
<sequence length="397" mass="43958">MAKQKFERTKPHVNIGTIGHIDHGKTTLTAAITKVLHDAHPDLNPFTPFDQIDKAPEEKARGITISIAHVEYQTDARHYAHVDCPGHADYIKNMITGAAQMDGAILVVSATDGPMPQTKEHVLLARQVGVPYIVVALNKADMVDDEEILELVELEVRELLNTYEFPGDDVPVIRVSALKALEGDKEWGEKLLELMAAVDASIPEPERDIDRPFLMPIEDVFTITGRGTVVTGRIERGIVKVNETVEIVGIKPETTTTTVTGVEMFRKLLDEGQAGDNVGLLLRGIKREDVERGQVIVKPKSITPHTVFEARVYILNKDEGGRHTPFFKNYRPQFYFRTTDVTGVVTLPEGTEMVMPGDNTEMTVELIQPIAMEEGLRFAIREGGRTVGAGQVLKVIK</sequence>
<gene>
    <name evidence="2" type="primary">tuf</name>
    <name type="ordered locus">Franean1_6051</name>
</gene>
<protein>
    <recommendedName>
        <fullName evidence="2">Elongation factor Tu</fullName>
        <shortName evidence="2">EF-Tu</shortName>
        <ecNumber evidence="2">3.6.5.3</ecNumber>
    </recommendedName>
</protein>
<keyword id="KW-0963">Cytoplasm</keyword>
<keyword id="KW-0251">Elongation factor</keyword>
<keyword id="KW-0342">GTP-binding</keyword>
<keyword id="KW-0378">Hydrolase</keyword>
<keyword id="KW-0460">Magnesium</keyword>
<keyword id="KW-0479">Metal-binding</keyword>
<keyword id="KW-0547">Nucleotide-binding</keyword>
<keyword id="KW-0648">Protein biosynthesis</keyword>
<reference key="1">
    <citation type="journal article" date="2007" name="Genome Res.">
        <title>Genome characteristics of facultatively symbiotic Frankia sp. strains reflect host range and host plant biogeography.</title>
        <authorList>
            <person name="Normand P."/>
            <person name="Lapierre P."/>
            <person name="Tisa L.S."/>
            <person name="Gogarten J.P."/>
            <person name="Alloisio N."/>
            <person name="Bagnarol E."/>
            <person name="Bassi C.A."/>
            <person name="Berry A.M."/>
            <person name="Bickhart D.M."/>
            <person name="Choisne N."/>
            <person name="Couloux A."/>
            <person name="Cournoyer B."/>
            <person name="Cruveiller S."/>
            <person name="Daubin V."/>
            <person name="Demange N."/>
            <person name="Francino M.P."/>
            <person name="Goltsman E."/>
            <person name="Huang Y."/>
            <person name="Kopp O.R."/>
            <person name="Labarre L."/>
            <person name="Lapidus A."/>
            <person name="Lavire C."/>
            <person name="Marechal J."/>
            <person name="Martinez M."/>
            <person name="Mastronunzio J.E."/>
            <person name="Mullin B.C."/>
            <person name="Niemann J."/>
            <person name="Pujic P."/>
            <person name="Rawnsley T."/>
            <person name="Rouy Z."/>
            <person name="Schenowitz C."/>
            <person name="Sellstedt A."/>
            <person name="Tavares F."/>
            <person name="Tomkins J.P."/>
            <person name="Vallenet D."/>
            <person name="Valverde C."/>
            <person name="Wall L.G."/>
            <person name="Wang Y."/>
            <person name="Medigue C."/>
            <person name="Benson D.R."/>
        </authorList>
    </citation>
    <scope>NUCLEOTIDE SEQUENCE [LARGE SCALE GENOMIC DNA]</scope>
    <source>
        <strain>EAN1pec</strain>
    </source>
</reference>